<dbReference type="EMBL" id="AB512494">
    <property type="protein sequence ID" value="BAI52983.1"/>
    <property type="molecule type" value="mRNA"/>
</dbReference>
<dbReference type="EMBL" id="AC037425">
    <property type="protein sequence ID" value="AAG13584.1"/>
    <property type="molecule type" value="Genomic_DNA"/>
</dbReference>
<dbReference type="EMBL" id="DP000086">
    <property type="protein sequence ID" value="AAP54281.1"/>
    <property type="molecule type" value="Genomic_DNA"/>
</dbReference>
<dbReference type="EMBL" id="AP008216">
    <property type="protein sequence ID" value="BAH94937.1"/>
    <property type="molecule type" value="Genomic_DNA"/>
</dbReference>
<dbReference type="EMBL" id="AP014966">
    <property type="protein sequence ID" value="BAT11310.1"/>
    <property type="molecule type" value="Genomic_DNA"/>
</dbReference>
<dbReference type="EMBL" id="CM000147">
    <property type="protein sequence ID" value="EAZ16425.1"/>
    <property type="molecule type" value="Genomic_DNA"/>
</dbReference>
<dbReference type="RefSeq" id="XP_015613424.1">
    <property type="nucleotide sequence ID" value="XM_015757938.1"/>
</dbReference>
<dbReference type="SMR" id="Q7XDD0"/>
<dbReference type="FunCoup" id="Q7XDD0">
    <property type="interactions" value="31"/>
</dbReference>
<dbReference type="PaxDb" id="39947-Q7XDD0"/>
<dbReference type="EnsemblPlants" id="Os10t0478000-01">
    <property type="protein sequence ID" value="Os10t0478000-01"/>
    <property type="gene ID" value="Os10g0478000"/>
</dbReference>
<dbReference type="Gramene" id="Os10t0478000-01">
    <property type="protein sequence ID" value="Os10t0478000-01"/>
    <property type="gene ID" value="Os10g0478000"/>
</dbReference>
<dbReference type="KEGG" id="dosa:Os10g0478000"/>
<dbReference type="eggNOG" id="ENOG502QT0B">
    <property type="taxonomic scope" value="Eukaryota"/>
</dbReference>
<dbReference type="HOGENOM" id="CLU_071168_0_2_1"/>
<dbReference type="InParanoid" id="Q7XDD0"/>
<dbReference type="OMA" id="TIRFPFH"/>
<dbReference type="OrthoDB" id="1906822at2759"/>
<dbReference type="PlantReactome" id="R-OSA-9035605">
    <property type="pathway name" value="Regulation of seed size"/>
</dbReference>
<dbReference type="Proteomes" id="UP000000763">
    <property type="component" value="Chromosome 10"/>
</dbReference>
<dbReference type="Proteomes" id="UP000007752">
    <property type="component" value="Chromosome 10"/>
</dbReference>
<dbReference type="Proteomes" id="UP000059680">
    <property type="component" value="Chromosome 10"/>
</dbReference>
<dbReference type="GO" id="GO:0005634">
    <property type="term" value="C:nucleus"/>
    <property type="evidence" value="ECO:0000250"/>
    <property type="project" value="UniProtKB"/>
</dbReference>
<dbReference type="GO" id="GO:0003677">
    <property type="term" value="F:DNA binding"/>
    <property type="evidence" value="ECO:0007669"/>
    <property type="project" value="UniProtKB-KW"/>
</dbReference>
<dbReference type="GO" id="GO:0009299">
    <property type="term" value="P:mRNA transcription"/>
    <property type="evidence" value="ECO:0000250"/>
    <property type="project" value="UniProtKB"/>
</dbReference>
<dbReference type="GO" id="GO:0090698">
    <property type="term" value="P:post-embryonic plant morphogenesis"/>
    <property type="evidence" value="ECO:0000250"/>
    <property type="project" value="UniProtKB"/>
</dbReference>
<dbReference type="GO" id="GO:0009416">
    <property type="term" value="P:response to light stimulus"/>
    <property type="evidence" value="ECO:0000318"/>
    <property type="project" value="GO_Central"/>
</dbReference>
<dbReference type="InterPro" id="IPR040222">
    <property type="entry name" value="ALOG"/>
</dbReference>
<dbReference type="InterPro" id="IPR006936">
    <property type="entry name" value="ALOG_dom"/>
</dbReference>
<dbReference type="PANTHER" id="PTHR31165">
    <property type="entry name" value="PROTEIN G1-LIKE2"/>
    <property type="match status" value="1"/>
</dbReference>
<dbReference type="PANTHER" id="PTHR31165:SF123">
    <property type="entry name" value="PROTEIN G1-LIKE5"/>
    <property type="match status" value="1"/>
</dbReference>
<dbReference type="Pfam" id="PF04852">
    <property type="entry name" value="ALOG_dom"/>
    <property type="match status" value="1"/>
</dbReference>
<dbReference type="PROSITE" id="PS51697">
    <property type="entry name" value="ALOG"/>
    <property type="match status" value="1"/>
</dbReference>
<evidence type="ECO:0000250" key="1"/>
<evidence type="ECO:0000255" key="2">
    <source>
        <dbReference type="PROSITE-ProRule" id="PRU01033"/>
    </source>
</evidence>
<evidence type="ECO:0000256" key="3">
    <source>
        <dbReference type="SAM" id="MobiDB-lite"/>
    </source>
</evidence>
<evidence type="ECO:0000305" key="4"/>
<comment type="function">
    <text evidence="1">Probable transcription regulator that acts as a developmental regulator by promoting cell growth in response to light.</text>
</comment>
<comment type="subcellular location">
    <subcellularLocation>
        <location evidence="1">Nucleus</location>
    </subcellularLocation>
</comment>
<comment type="similarity">
    <text evidence="4">Belongs to the plant homeotic and developmental regulators ALOG protein family.</text>
</comment>
<feature type="chain" id="PRO_0000425307" description="Protein G1-like5">
    <location>
        <begin position="1"/>
        <end position="204"/>
    </location>
</feature>
<feature type="domain" description="ALOG" evidence="2">
    <location>
        <begin position="40"/>
        <end position="167"/>
    </location>
</feature>
<feature type="region of interest" description="Disordered" evidence="3">
    <location>
        <begin position="1"/>
        <end position="45"/>
    </location>
</feature>
<feature type="region of interest" description="Disordered" evidence="3">
    <location>
        <begin position="157"/>
        <end position="204"/>
    </location>
</feature>
<feature type="short sequence motif" description="Nuclear localization signal" evidence="1">
    <location>
        <begin position="165"/>
        <end position="169"/>
    </location>
</feature>
<feature type="compositionally biased region" description="Low complexity" evidence="3">
    <location>
        <begin position="26"/>
        <end position="39"/>
    </location>
</feature>
<sequence length="204" mass="21835">MEFVAHAAAPDSPHSDSGGGGGGMATGATSASAAGASPSRYESQKRRDWNTFGQYLRNHRPPLSLARCSGAHVLEFLRYLDQFGKTKVHAPACPFFGHPAPPAPCPCPLRQAWGSLDALVGRLRAAYEENGGRPENNPFGARAVRLYLREVREHQARARGVSYEKKKRKKPPHPSSAAAAHDDAANGALHHHHHMPPPPPGAAA</sequence>
<reference key="1">
    <citation type="journal article" date="2009" name="Proc. Natl. Acad. Sci. U.S.A.">
        <title>The homeotic gene long sterile lemma (G1) specifies sterile lemma identity in the rice spikelet.</title>
        <authorList>
            <person name="Yoshida A."/>
            <person name="Suzaki Y."/>
            <person name="Tanaka W."/>
            <person name="Hirano H.-Y."/>
        </authorList>
    </citation>
    <scope>NUCLEOTIDE SEQUENCE [MRNA]</scope>
    <scope>GENE FAMILY</scope>
    <scope>NOMENCLATURE</scope>
    <source>
        <strain>cv. Nipponbare</strain>
    </source>
</reference>
<reference key="2">
    <citation type="journal article" date="2003" name="Science">
        <title>In-depth view of structure, activity, and evolution of rice chromosome 10.</title>
        <authorList>
            <person name="Yu Y."/>
            <person name="Rambo T."/>
            <person name="Currie J."/>
            <person name="Saski C."/>
            <person name="Kim H.-R."/>
            <person name="Collura K."/>
            <person name="Thompson S."/>
            <person name="Simmons J."/>
            <person name="Yang T.-J."/>
            <person name="Nah G."/>
            <person name="Patel A.J."/>
            <person name="Thurmond S."/>
            <person name="Henry D."/>
            <person name="Oates R."/>
            <person name="Palmer M."/>
            <person name="Pries G."/>
            <person name="Gibson J."/>
            <person name="Anderson H."/>
            <person name="Paradkar M."/>
            <person name="Crane L."/>
            <person name="Dale J."/>
            <person name="Carver M.B."/>
            <person name="Wood T."/>
            <person name="Frisch D."/>
            <person name="Engler F."/>
            <person name="Soderlund C."/>
            <person name="Palmer L.E."/>
            <person name="Teytelman L."/>
            <person name="Nascimento L."/>
            <person name="De la Bastide M."/>
            <person name="Spiegel L."/>
            <person name="Ware D."/>
            <person name="O'Shaughnessy A."/>
            <person name="Dike S."/>
            <person name="Dedhia N."/>
            <person name="Preston R."/>
            <person name="Huang E."/>
            <person name="Ferraro K."/>
            <person name="Kuit K."/>
            <person name="Miller B."/>
            <person name="Zutavern T."/>
            <person name="Katzenberger F."/>
            <person name="Muller S."/>
            <person name="Balija V."/>
            <person name="Martienssen R.A."/>
            <person name="Stein L."/>
            <person name="Minx P."/>
            <person name="Johnson D."/>
            <person name="Cordum H."/>
            <person name="Mardis E."/>
            <person name="Cheng Z."/>
            <person name="Jiang J."/>
            <person name="Wilson R."/>
            <person name="McCombie W.R."/>
            <person name="Wing R.A."/>
            <person name="Yuan Q."/>
            <person name="Ouyang S."/>
            <person name="Liu J."/>
            <person name="Jones K.M."/>
            <person name="Gansberger K."/>
            <person name="Moffat K."/>
            <person name="Hill J."/>
            <person name="Tsitrin T."/>
            <person name="Overton L."/>
            <person name="Bera J."/>
            <person name="Kim M."/>
            <person name="Jin S."/>
            <person name="Tallon L."/>
            <person name="Ciecko A."/>
            <person name="Pai G."/>
            <person name="Van Aken S."/>
            <person name="Utterback T."/>
            <person name="Reidmuller S."/>
            <person name="Bormann J."/>
            <person name="Feldblyum T."/>
            <person name="Hsiao J."/>
            <person name="Zismann V."/>
            <person name="Blunt S."/>
            <person name="de Vazeille A.R."/>
            <person name="Shaffer T."/>
            <person name="Koo H."/>
            <person name="Suh B."/>
            <person name="Yang Q."/>
            <person name="Haas B."/>
            <person name="Peterson J."/>
            <person name="Pertea M."/>
            <person name="Volfovsky N."/>
            <person name="Wortman J."/>
            <person name="White O."/>
            <person name="Salzberg S.L."/>
            <person name="Fraser C.M."/>
            <person name="Buell C.R."/>
            <person name="Messing J."/>
            <person name="Song R."/>
            <person name="Fuks G."/>
            <person name="Llaca V."/>
            <person name="Kovchak S."/>
            <person name="Young S."/>
            <person name="Bowers J.E."/>
            <person name="Paterson A.H."/>
            <person name="Johns M.A."/>
            <person name="Mao L."/>
            <person name="Pan H."/>
            <person name="Dean R.A."/>
        </authorList>
    </citation>
    <scope>NUCLEOTIDE SEQUENCE [LARGE SCALE GENOMIC DNA]</scope>
    <source>
        <strain>cv. Nipponbare</strain>
    </source>
</reference>
<reference key="3">
    <citation type="journal article" date="2005" name="Nature">
        <title>The map-based sequence of the rice genome.</title>
        <authorList>
            <consortium name="International rice genome sequencing project (IRGSP)"/>
        </authorList>
    </citation>
    <scope>NUCLEOTIDE SEQUENCE [LARGE SCALE GENOMIC DNA]</scope>
    <source>
        <strain>cv. Nipponbare</strain>
    </source>
</reference>
<reference key="4">
    <citation type="journal article" date="2008" name="Nucleic Acids Res.">
        <title>The rice annotation project database (RAP-DB): 2008 update.</title>
        <authorList>
            <consortium name="The rice annotation project (RAP)"/>
        </authorList>
    </citation>
    <scope>GENOME REANNOTATION</scope>
    <source>
        <strain>cv. Nipponbare</strain>
    </source>
</reference>
<reference key="5">
    <citation type="journal article" date="2013" name="Rice">
        <title>Improvement of the Oryza sativa Nipponbare reference genome using next generation sequence and optical map data.</title>
        <authorList>
            <person name="Kawahara Y."/>
            <person name="de la Bastide M."/>
            <person name="Hamilton J.P."/>
            <person name="Kanamori H."/>
            <person name="McCombie W.R."/>
            <person name="Ouyang S."/>
            <person name="Schwartz D.C."/>
            <person name="Tanaka T."/>
            <person name="Wu J."/>
            <person name="Zhou S."/>
            <person name="Childs K.L."/>
            <person name="Davidson R.M."/>
            <person name="Lin H."/>
            <person name="Quesada-Ocampo L."/>
            <person name="Vaillancourt B."/>
            <person name="Sakai H."/>
            <person name="Lee S.S."/>
            <person name="Kim J."/>
            <person name="Numa H."/>
            <person name="Itoh T."/>
            <person name="Buell C.R."/>
            <person name="Matsumoto T."/>
        </authorList>
    </citation>
    <scope>GENOME REANNOTATION</scope>
    <source>
        <strain>cv. Nipponbare</strain>
    </source>
</reference>
<reference key="6">
    <citation type="journal article" date="2005" name="PLoS Biol.">
        <title>The genomes of Oryza sativa: a history of duplications.</title>
        <authorList>
            <person name="Yu J."/>
            <person name="Wang J."/>
            <person name="Lin W."/>
            <person name="Li S."/>
            <person name="Li H."/>
            <person name="Zhou J."/>
            <person name="Ni P."/>
            <person name="Dong W."/>
            <person name="Hu S."/>
            <person name="Zeng C."/>
            <person name="Zhang J."/>
            <person name="Zhang Y."/>
            <person name="Li R."/>
            <person name="Xu Z."/>
            <person name="Li S."/>
            <person name="Li X."/>
            <person name="Zheng H."/>
            <person name="Cong L."/>
            <person name="Lin L."/>
            <person name="Yin J."/>
            <person name="Geng J."/>
            <person name="Li G."/>
            <person name="Shi J."/>
            <person name="Liu J."/>
            <person name="Lv H."/>
            <person name="Li J."/>
            <person name="Wang J."/>
            <person name="Deng Y."/>
            <person name="Ran L."/>
            <person name="Shi X."/>
            <person name="Wang X."/>
            <person name="Wu Q."/>
            <person name="Li C."/>
            <person name="Ren X."/>
            <person name="Wang J."/>
            <person name="Wang X."/>
            <person name="Li D."/>
            <person name="Liu D."/>
            <person name="Zhang X."/>
            <person name="Ji Z."/>
            <person name="Zhao W."/>
            <person name="Sun Y."/>
            <person name="Zhang Z."/>
            <person name="Bao J."/>
            <person name="Han Y."/>
            <person name="Dong L."/>
            <person name="Ji J."/>
            <person name="Chen P."/>
            <person name="Wu S."/>
            <person name="Liu J."/>
            <person name="Xiao Y."/>
            <person name="Bu D."/>
            <person name="Tan J."/>
            <person name="Yang L."/>
            <person name="Ye C."/>
            <person name="Zhang J."/>
            <person name="Xu J."/>
            <person name="Zhou Y."/>
            <person name="Yu Y."/>
            <person name="Zhang B."/>
            <person name="Zhuang S."/>
            <person name="Wei H."/>
            <person name="Liu B."/>
            <person name="Lei M."/>
            <person name="Yu H."/>
            <person name="Li Y."/>
            <person name="Xu H."/>
            <person name="Wei S."/>
            <person name="He X."/>
            <person name="Fang L."/>
            <person name="Zhang Z."/>
            <person name="Zhang Y."/>
            <person name="Huang X."/>
            <person name="Su Z."/>
            <person name="Tong W."/>
            <person name="Li J."/>
            <person name="Tong Z."/>
            <person name="Li S."/>
            <person name="Ye J."/>
            <person name="Wang L."/>
            <person name="Fang L."/>
            <person name="Lei T."/>
            <person name="Chen C.-S."/>
            <person name="Chen H.-C."/>
            <person name="Xu Z."/>
            <person name="Li H."/>
            <person name="Huang H."/>
            <person name="Zhang F."/>
            <person name="Xu H."/>
            <person name="Li N."/>
            <person name="Zhao C."/>
            <person name="Li S."/>
            <person name="Dong L."/>
            <person name="Huang Y."/>
            <person name="Li L."/>
            <person name="Xi Y."/>
            <person name="Qi Q."/>
            <person name="Li W."/>
            <person name="Zhang B."/>
            <person name="Hu W."/>
            <person name="Zhang Y."/>
            <person name="Tian X."/>
            <person name="Jiao Y."/>
            <person name="Liang X."/>
            <person name="Jin J."/>
            <person name="Gao L."/>
            <person name="Zheng W."/>
            <person name="Hao B."/>
            <person name="Liu S.-M."/>
            <person name="Wang W."/>
            <person name="Yuan L."/>
            <person name="Cao M."/>
            <person name="McDermott J."/>
            <person name="Samudrala R."/>
            <person name="Wang J."/>
            <person name="Wong G.K.-S."/>
            <person name="Yang H."/>
        </authorList>
    </citation>
    <scope>NUCLEOTIDE SEQUENCE [LARGE SCALE GENOMIC DNA]</scope>
    <source>
        <strain>cv. Nipponbare</strain>
    </source>
</reference>
<reference key="7">
    <citation type="journal article" date="2012" name="Biol. Direct">
        <title>ALOG domains: provenance of plant homeotic and developmental regulators from the DNA-binding domain of a novel class of DIRS1-type retroposons.</title>
        <authorList>
            <person name="Iyer L.M."/>
            <person name="Aravind L."/>
        </authorList>
    </citation>
    <scope>DNA-BINDING</scope>
    <scope>GENE FAMILY</scope>
</reference>
<keyword id="KW-0217">Developmental protein</keyword>
<keyword id="KW-0238">DNA-binding</keyword>
<keyword id="KW-0539">Nucleus</keyword>
<keyword id="KW-1185">Reference proteome</keyword>
<keyword id="KW-0804">Transcription</keyword>
<keyword id="KW-0805">Transcription regulation</keyword>
<proteinExistence type="evidence at protein level"/>
<name>G1L5_ORYSJ</name>
<gene>
    <name type="primary">G1L5</name>
    <name type="ordered locus">Os10g0478000</name>
    <name type="ordered locus">LOC_Os10g33780</name>
    <name type="ORF">OsJ_31895</name>
    <name type="ORF">OSJNBa0055P24.1</name>
</gene>
<accession>Q7XDD0</accession>
<accession>A0A0P0XVT2</accession>
<accession>Q9FWH7</accession>
<protein>
    <recommendedName>
        <fullName>Protein G1-like5</fullName>
    </recommendedName>
</protein>
<organism>
    <name type="scientific">Oryza sativa subsp. japonica</name>
    <name type="common">Rice</name>
    <dbReference type="NCBI Taxonomy" id="39947"/>
    <lineage>
        <taxon>Eukaryota</taxon>
        <taxon>Viridiplantae</taxon>
        <taxon>Streptophyta</taxon>
        <taxon>Embryophyta</taxon>
        <taxon>Tracheophyta</taxon>
        <taxon>Spermatophyta</taxon>
        <taxon>Magnoliopsida</taxon>
        <taxon>Liliopsida</taxon>
        <taxon>Poales</taxon>
        <taxon>Poaceae</taxon>
        <taxon>BOP clade</taxon>
        <taxon>Oryzoideae</taxon>
        <taxon>Oryzeae</taxon>
        <taxon>Oryzinae</taxon>
        <taxon>Oryza</taxon>
        <taxon>Oryza sativa</taxon>
    </lineage>
</organism>